<evidence type="ECO:0000255" key="1">
    <source>
        <dbReference type="PROSITE-ProRule" id="PRU00042"/>
    </source>
</evidence>
<evidence type="ECO:0000256" key="2">
    <source>
        <dbReference type="SAM" id="MobiDB-lite"/>
    </source>
</evidence>
<evidence type="ECO:0000269" key="3">
    <source>
    </source>
</evidence>
<comment type="function">
    <text>Interacts with the internal control region (ICR) of approximately 50 bases within the 5S RNA genes, is required for correct transcription of these genes by RNA polymerase III. Also binds the transcribed 5S RNA's.</text>
</comment>
<comment type="subcellular location">
    <subcellularLocation>
        <location>Nucleus</location>
    </subcellularLocation>
</comment>
<comment type="miscellaneous">
    <text evidence="3">Present with 1380 molecules/cell in log phase SD medium.</text>
</comment>
<name>TF3A_YEAST</name>
<proteinExistence type="evidence at protein level"/>
<feature type="chain" id="PRO_0000047086" description="Transcription factor IIIA">
    <location>
        <begin position="1"/>
        <end position="429"/>
    </location>
</feature>
<feature type="zinc finger region" description="C2H2-type 1" evidence="1">
    <location>
        <begin position="49"/>
        <end position="74"/>
    </location>
</feature>
<feature type="zinc finger region" description="C2H2-type 2" evidence="1">
    <location>
        <begin position="80"/>
        <end position="102"/>
    </location>
</feature>
<feature type="zinc finger region" description="C2H2-type 3" evidence="1">
    <location>
        <begin position="108"/>
        <end position="130"/>
    </location>
</feature>
<feature type="zinc finger region" description="C2H2-type 4" evidence="1">
    <location>
        <begin position="134"/>
        <end position="159"/>
    </location>
</feature>
<feature type="zinc finger region" description="C2H2-type 5" evidence="1">
    <location>
        <begin position="163"/>
        <end position="186"/>
    </location>
</feature>
<feature type="zinc finger region" description="C2H2-type 6" evidence="1">
    <location>
        <begin position="194"/>
        <end position="219"/>
    </location>
</feature>
<feature type="zinc finger region" description="C2H2-type 7" evidence="1">
    <location>
        <begin position="222"/>
        <end position="244"/>
    </location>
</feature>
<feature type="zinc finger region" description="C2H2-type 8" evidence="1">
    <location>
        <begin position="253"/>
        <end position="277"/>
    </location>
</feature>
<feature type="zinc finger region" description="C2H2-type 9" evidence="1">
    <location>
        <begin position="365"/>
        <end position="389"/>
    </location>
</feature>
<feature type="region of interest" description="Disordered" evidence="2">
    <location>
        <begin position="1"/>
        <end position="45"/>
    </location>
</feature>
<feature type="region of interest" description="Disordered" evidence="2">
    <location>
        <begin position="406"/>
        <end position="429"/>
    </location>
</feature>
<feature type="compositionally biased region" description="Low complexity" evidence="2">
    <location>
        <begin position="24"/>
        <end position="44"/>
    </location>
</feature>
<feature type="compositionally biased region" description="Basic and acidic residues" evidence="2">
    <location>
        <begin position="406"/>
        <end position="416"/>
    </location>
</feature>
<accession>P39933</accession>
<accession>D6W4I6</accession>
<protein>
    <recommendedName>
        <fullName>Transcription factor IIIA</fullName>
        <shortName>TFIIIA</shortName>
    </recommendedName>
    <alternativeName>
        <fullName>Putative zinc finger protein 1</fullName>
    </alternativeName>
</protein>
<reference key="1">
    <citation type="journal article" date="1992" name="J. Biol. Chem.">
        <title>The deduced sequence of the transcription factor TFIIIA from Saccharomyces cerevisiae reveals extensive divergence from Xenopus TFIIIA.</title>
        <authorList>
            <person name="Archambault J."/>
            <person name="Milne C.A."/>
            <person name="Schappert K.T."/>
            <person name="Baum B."/>
            <person name="Friesen J.D."/>
            <person name="Segall J."/>
        </authorList>
    </citation>
    <scope>NUCLEOTIDE SEQUENCE [GENOMIC DNA]</scope>
</reference>
<reference key="2">
    <citation type="journal article" date="1992" name="Proc. Natl. Acad. Sci. U.S.A.">
        <title>Genes encoding transcription factor IIIA and the RNA polymerase common subunit RPB6 are divergently transcribed in Saccharomyces cerevisiae.</title>
        <authorList>
            <person name="Woychik N.A."/>
            <person name="Young R.A."/>
        </authorList>
    </citation>
    <scope>NUCLEOTIDE SEQUENCE [GENOMIC DNA]</scope>
</reference>
<reference key="3">
    <citation type="journal article" date="1997" name="Nature">
        <title>The nucleotide sequence of Saccharomyces cerevisiae chromosome XVI.</title>
        <authorList>
            <person name="Bussey H."/>
            <person name="Storms R.K."/>
            <person name="Ahmed A."/>
            <person name="Albermann K."/>
            <person name="Allen E."/>
            <person name="Ansorge W."/>
            <person name="Araujo R."/>
            <person name="Aparicio A."/>
            <person name="Barrell B.G."/>
            <person name="Badcock K."/>
            <person name="Benes V."/>
            <person name="Botstein D."/>
            <person name="Bowman S."/>
            <person name="Brueckner M."/>
            <person name="Carpenter J."/>
            <person name="Cherry J.M."/>
            <person name="Chung E."/>
            <person name="Churcher C.M."/>
            <person name="Coster F."/>
            <person name="Davis K."/>
            <person name="Davis R.W."/>
            <person name="Dietrich F.S."/>
            <person name="Delius H."/>
            <person name="DiPaolo T."/>
            <person name="Dubois E."/>
            <person name="Duesterhoeft A."/>
            <person name="Duncan M."/>
            <person name="Floeth M."/>
            <person name="Fortin N."/>
            <person name="Friesen J.D."/>
            <person name="Fritz C."/>
            <person name="Goffeau A."/>
            <person name="Hall J."/>
            <person name="Hebling U."/>
            <person name="Heumann K."/>
            <person name="Hilbert H."/>
            <person name="Hillier L.W."/>
            <person name="Hunicke-Smith S."/>
            <person name="Hyman R.W."/>
            <person name="Johnston M."/>
            <person name="Kalman S."/>
            <person name="Kleine K."/>
            <person name="Komp C."/>
            <person name="Kurdi O."/>
            <person name="Lashkari D."/>
            <person name="Lew H."/>
            <person name="Lin A."/>
            <person name="Lin D."/>
            <person name="Louis E.J."/>
            <person name="Marathe R."/>
            <person name="Messenguy F."/>
            <person name="Mewes H.-W."/>
            <person name="Mirtipati S."/>
            <person name="Moestl D."/>
            <person name="Mueller-Auer S."/>
            <person name="Namath A."/>
            <person name="Nentwich U."/>
            <person name="Oefner P."/>
            <person name="Pearson D."/>
            <person name="Petel F.X."/>
            <person name="Pohl T.M."/>
            <person name="Purnelle B."/>
            <person name="Rajandream M.A."/>
            <person name="Rechmann S."/>
            <person name="Rieger M."/>
            <person name="Riles L."/>
            <person name="Roberts D."/>
            <person name="Schaefer M."/>
            <person name="Scharfe M."/>
            <person name="Scherens B."/>
            <person name="Schramm S."/>
            <person name="Schroeder M."/>
            <person name="Sdicu A.-M."/>
            <person name="Tettelin H."/>
            <person name="Urrestarazu L.A."/>
            <person name="Ushinsky S."/>
            <person name="Vierendeels F."/>
            <person name="Vissers S."/>
            <person name="Voss H."/>
            <person name="Walsh S.V."/>
            <person name="Wambutt R."/>
            <person name="Wang Y."/>
            <person name="Wedler E."/>
            <person name="Wedler H."/>
            <person name="Winnett E."/>
            <person name="Zhong W.-W."/>
            <person name="Zollner A."/>
            <person name="Vo D.H."/>
            <person name="Hani J."/>
        </authorList>
    </citation>
    <scope>NUCLEOTIDE SEQUENCE [LARGE SCALE GENOMIC DNA]</scope>
    <source>
        <strain>ATCC 204508 / S288c</strain>
    </source>
</reference>
<reference key="4">
    <citation type="journal article" date="2014" name="G3 (Bethesda)">
        <title>The reference genome sequence of Saccharomyces cerevisiae: Then and now.</title>
        <authorList>
            <person name="Engel S.R."/>
            <person name="Dietrich F.S."/>
            <person name="Fisk D.G."/>
            <person name="Binkley G."/>
            <person name="Balakrishnan R."/>
            <person name="Costanzo M.C."/>
            <person name="Dwight S.S."/>
            <person name="Hitz B.C."/>
            <person name="Karra K."/>
            <person name="Nash R.S."/>
            <person name="Weng S."/>
            <person name="Wong E.D."/>
            <person name="Lloyd P."/>
            <person name="Skrzypek M.S."/>
            <person name="Miyasato S.R."/>
            <person name="Simison M."/>
            <person name="Cherry J.M."/>
        </authorList>
    </citation>
    <scope>GENOME REANNOTATION</scope>
    <source>
        <strain>ATCC 204508 / S288c</strain>
    </source>
</reference>
<reference key="5">
    <citation type="journal article" date="2003" name="Nature">
        <title>Global analysis of protein expression in yeast.</title>
        <authorList>
            <person name="Ghaemmaghami S."/>
            <person name="Huh W.-K."/>
            <person name="Bower K."/>
            <person name="Howson R.W."/>
            <person name="Belle A."/>
            <person name="Dephoure N."/>
            <person name="O'Shea E.K."/>
            <person name="Weissman J.S."/>
        </authorList>
    </citation>
    <scope>LEVEL OF PROTEIN EXPRESSION [LARGE SCALE ANALYSIS]</scope>
</reference>
<reference key="6">
    <citation type="journal article" date="2008" name="Mol. Cell. Proteomics">
        <title>A multidimensional chromatography technology for in-depth phosphoproteome analysis.</title>
        <authorList>
            <person name="Albuquerque C.P."/>
            <person name="Smolka M.B."/>
            <person name="Payne S.H."/>
            <person name="Bafna V."/>
            <person name="Eng J."/>
            <person name="Zhou H."/>
        </authorList>
    </citation>
    <scope>IDENTIFICATION BY MASS SPECTROMETRY [LARGE SCALE ANALYSIS]</scope>
</reference>
<gene>
    <name type="primary">PZF1</name>
    <name type="synonym">TFC2</name>
    <name type="synonym">TFIIIA</name>
    <name type="ordered locus">YPR186C</name>
    <name type="ORF">P9677.9</name>
</gene>
<dbReference type="EMBL" id="M80611">
    <property type="protein sequence ID" value="AAB08014.1"/>
    <property type="molecule type" value="Genomic_DNA"/>
</dbReference>
<dbReference type="EMBL" id="M90638">
    <property type="status" value="NOT_ANNOTATED_CDS"/>
    <property type="molecule type" value="Genomic_DNA"/>
</dbReference>
<dbReference type="EMBL" id="U25841">
    <property type="protein sequence ID" value="AAB64615.1"/>
    <property type="molecule type" value="Genomic_DNA"/>
</dbReference>
<dbReference type="EMBL" id="BK006949">
    <property type="protein sequence ID" value="DAA11602.1"/>
    <property type="molecule type" value="Genomic_DNA"/>
</dbReference>
<dbReference type="PIR" id="S20050">
    <property type="entry name" value="S20050"/>
</dbReference>
<dbReference type="RefSeq" id="NP_015512.1">
    <property type="nucleotide sequence ID" value="NM_001184283.1"/>
</dbReference>
<dbReference type="PDB" id="8FFZ">
    <property type="method" value="EM"/>
    <property type="resolution" value="3.80 A"/>
    <property type="chains" value="A=1-429"/>
</dbReference>
<dbReference type="PDBsum" id="8FFZ"/>
<dbReference type="EMDB" id="EMD-29071"/>
<dbReference type="SMR" id="P39933"/>
<dbReference type="BioGRID" id="36358">
    <property type="interactions" value="99"/>
</dbReference>
<dbReference type="FunCoup" id="P39933">
    <property type="interactions" value="65"/>
</dbReference>
<dbReference type="IntAct" id="P39933">
    <property type="interactions" value="1"/>
</dbReference>
<dbReference type="MINT" id="P39933"/>
<dbReference type="STRING" id="4932.YPR186C"/>
<dbReference type="iPTMnet" id="P39933"/>
<dbReference type="PaxDb" id="4932-YPR186C"/>
<dbReference type="PeptideAtlas" id="P39933"/>
<dbReference type="EnsemblFungi" id="YPR186C_mRNA">
    <property type="protein sequence ID" value="YPR186C"/>
    <property type="gene ID" value="YPR186C"/>
</dbReference>
<dbReference type="GeneID" id="856316"/>
<dbReference type="KEGG" id="sce:YPR186C"/>
<dbReference type="AGR" id="SGD:S000006390"/>
<dbReference type="SGD" id="S000006390">
    <property type="gene designation" value="PZF1"/>
</dbReference>
<dbReference type="VEuPathDB" id="FungiDB:YPR186C"/>
<dbReference type="eggNOG" id="KOG1721">
    <property type="taxonomic scope" value="Eukaryota"/>
</dbReference>
<dbReference type="GeneTree" id="ENSGT00940000176804"/>
<dbReference type="HOGENOM" id="CLU_044102_0_0_1"/>
<dbReference type="InParanoid" id="P39933"/>
<dbReference type="OMA" id="SFYKHPQ"/>
<dbReference type="OrthoDB" id="4748970at2759"/>
<dbReference type="BioCyc" id="YEAST:G3O-34309-MONOMER"/>
<dbReference type="BioGRID-ORCS" id="856316">
    <property type="hits" value="4 hits in 13 CRISPR screens"/>
</dbReference>
<dbReference type="PRO" id="PR:P39933"/>
<dbReference type="Proteomes" id="UP000002311">
    <property type="component" value="Chromosome XVI"/>
</dbReference>
<dbReference type="RNAct" id="P39933">
    <property type="molecule type" value="protein"/>
</dbReference>
<dbReference type="GO" id="GO:0005654">
    <property type="term" value="C:nucleoplasm"/>
    <property type="evidence" value="ECO:0000304"/>
    <property type="project" value="Reactome"/>
</dbReference>
<dbReference type="GO" id="GO:0005634">
    <property type="term" value="C:nucleus"/>
    <property type="evidence" value="ECO:0000305"/>
    <property type="project" value="SGD"/>
</dbReference>
<dbReference type="GO" id="GO:0000981">
    <property type="term" value="F:DNA-binding transcription factor activity, RNA polymerase II-specific"/>
    <property type="evidence" value="ECO:0000318"/>
    <property type="project" value="GO_Central"/>
</dbReference>
<dbReference type="GO" id="GO:0003723">
    <property type="term" value="F:RNA binding"/>
    <property type="evidence" value="ECO:0007669"/>
    <property type="project" value="UniProtKB-KW"/>
</dbReference>
<dbReference type="GO" id="GO:0000978">
    <property type="term" value="F:RNA polymerase II cis-regulatory region sequence-specific DNA binding"/>
    <property type="evidence" value="ECO:0000318"/>
    <property type="project" value="GO_Central"/>
</dbReference>
<dbReference type="GO" id="GO:0001010">
    <property type="term" value="F:RNA polymerase II sequence-specific DNA-binding transcription factor recruiting activity"/>
    <property type="evidence" value="ECO:0000314"/>
    <property type="project" value="SGD"/>
</dbReference>
<dbReference type="GO" id="GO:0001002">
    <property type="term" value="F:RNA polymerase III type 1 promoter sequence-specific DNA binding"/>
    <property type="evidence" value="ECO:0000314"/>
    <property type="project" value="SGD"/>
</dbReference>
<dbReference type="GO" id="GO:0008270">
    <property type="term" value="F:zinc ion binding"/>
    <property type="evidence" value="ECO:0007669"/>
    <property type="project" value="UniProtKB-KW"/>
</dbReference>
<dbReference type="GO" id="GO:0042791">
    <property type="term" value="P:5S class rRNA transcription by RNA polymerase III"/>
    <property type="evidence" value="ECO:0000314"/>
    <property type="project" value="SGD"/>
</dbReference>
<dbReference type="GO" id="GO:0006355">
    <property type="term" value="P:regulation of DNA-templated transcription"/>
    <property type="evidence" value="ECO:0000318"/>
    <property type="project" value="GO_Central"/>
</dbReference>
<dbReference type="FunFam" id="3.30.160.60:FF:002391">
    <property type="entry name" value="Transcription factor IIIA"/>
    <property type="match status" value="1"/>
</dbReference>
<dbReference type="FunFam" id="3.30.160.60:FF:002645">
    <property type="entry name" value="Transcription factor IIIA"/>
    <property type="match status" value="1"/>
</dbReference>
<dbReference type="Gene3D" id="3.30.160.60">
    <property type="entry name" value="Classic Zinc Finger"/>
    <property type="match status" value="6"/>
</dbReference>
<dbReference type="InterPro" id="IPR051061">
    <property type="entry name" value="Zinc_finger_trans_reg"/>
</dbReference>
<dbReference type="InterPro" id="IPR036236">
    <property type="entry name" value="Znf_C2H2_sf"/>
</dbReference>
<dbReference type="InterPro" id="IPR013087">
    <property type="entry name" value="Znf_C2H2_type"/>
</dbReference>
<dbReference type="PANTHER" id="PTHR46179:SF13">
    <property type="entry name" value="C2H2-TYPE DOMAIN-CONTAINING PROTEIN"/>
    <property type="match status" value="1"/>
</dbReference>
<dbReference type="PANTHER" id="PTHR46179">
    <property type="entry name" value="ZINC FINGER PROTEIN"/>
    <property type="match status" value="1"/>
</dbReference>
<dbReference type="Pfam" id="PF00096">
    <property type="entry name" value="zf-C2H2"/>
    <property type="match status" value="2"/>
</dbReference>
<dbReference type="Pfam" id="PF13894">
    <property type="entry name" value="zf-C2H2_4"/>
    <property type="match status" value="1"/>
</dbReference>
<dbReference type="SMART" id="SM00355">
    <property type="entry name" value="ZnF_C2H2"/>
    <property type="match status" value="9"/>
</dbReference>
<dbReference type="SUPFAM" id="SSF57667">
    <property type="entry name" value="beta-beta-alpha zinc fingers"/>
    <property type="match status" value="4"/>
</dbReference>
<dbReference type="PROSITE" id="PS00028">
    <property type="entry name" value="ZINC_FINGER_C2H2_1"/>
    <property type="match status" value="8"/>
</dbReference>
<dbReference type="PROSITE" id="PS50157">
    <property type="entry name" value="ZINC_FINGER_C2H2_2"/>
    <property type="match status" value="6"/>
</dbReference>
<sequence length="429" mass="50027">MGGEVLNNEGMPLAELKQETIPISRSESSESLNSLTSTRSSSSNRPKTYFCDYDGCDKAFTRPSILTEHQLSVHQGLRAFQCDKCAKSFVKKSHLERHLYTHSDTKPFQCSYCGKGVTTRQQLKRHEVTHTKSFICPEEGCNLRFYKHPQLRAHILSVHLHKLTCPHCNKSFQRPYRLRNHISKHHDPEVENPYQCTFAGCCKEFRIWSQLQSHIKNDHPKLKCPICSKPCVGENGLQMHMIIHDDSLVTKNWKCHICPDMSFSRKHDLLTHYGSIHTEEDIPLELKYKISDIQQLVQDHGVQLGNSKHSNEQDEEKISNRLRKRRKLTENNNVEFLQNEVDLEKRLESGENGLNLLLNTVGRKYRCFYNNCSRTFKTKEKYEKHIDKHKVHELKLKILQEKEENKTLVDQNHKEPFIIQKETQSAGDK</sequence>
<keyword id="KW-0002">3D-structure</keyword>
<keyword id="KW-0238">DNA-binding</keyword>
<keyword id="KW-0479">Metal-binding</keyword>
<keyword id="KW-0539">Nucleus</keyword>
<keyword id="KW-1185">Reference proteome</keyword>
<keyword id="KW-0677">Repeat</keyword>
<keyword id="KW-0694">RNA-binding</keyword>
<keyword id="KW-0804">Transcription</keyword>
<keyword id="KW-0805">Transcription regulation</keyword>
<keyword id="KW-0862">Zinc</keyword>
<keyword id="KW-0863">Zinc-finger</keyword>
<organism>
    <name type="scientific">Saccharomyces cerevisiae (strain ATCC 204508 / S288c)</name>
    <name type="common">Baker's yeast</name>
    <dbReference type="NCBI Taxonomy" id="559292"/>
    <lineage>
        <taxon>Eukaryota</taxon>
        <taxon>Fungi</taxon>
        <taxon>Dikarya</taxon>
        <taxon>Ascomycota</taxon>
        <taxon>Saccharomycotina</taxon>
        <taxon>Saccharomycetes</taxon>
        <taxon>Saccharomycetales</taxon>
        <taxon>Saccharomycetaceae</taxon>
        <taxon>Saccharomyces</taxon>
    </lineage>
</organism>